<accession>B2V630</accession>
<proteinExistence type="inferred from homology"/>
<protein>
    <recommendedName>
        <fullName evidence="1">3-phosphoshikimate 1-carboxyvinyltransferase</fullName>
        <ecNumber evidence="1">2.5.1.19</ecNumber>
    </recommendedName>
    <alternativeName>
        <fullName evidence="1">5-enolpyruvylshikimate-3-phosphate synthase</fullName>
        <shortName evidence="1">EPSP synthase</shortName>
        <shortName evidence="1">EPSPS</shortName>
    </alternativeName>
</protein>
<keyword id="KW-0028">Amino-acid biosynthesis</keyword>
<keyword id="KW-0057">Aromatic amino acid biosynthesis</keyword>
<keyword id="KW-0963">Cytoplasm</keyword>
<keyword id="KW-0808">Transferase</keyword>
<gene>
    <name evidence="1" type="primary">aroA</name>
    <name type="ordered locus">SYO3AOP1_0004</name>
</gene>
<comment type="function">
    <text evidence="1">Catalyzes the transfer of the enolpyruvyl moiety of phosphoenolpyruvate (PEP) to the 5-hydroxyl of shikimate-3-phosphate (S3P) to produce enolpyruvyl shikimate-3-phosphate and inorganic phosphate.</text>
</comment>
<comment type="catalytic activity">
    <reaction evidence="1">
        <text>3-phosphoshikimate + phosphoenolpyruvate = 5-O-(1-carboxyvinyl)-3-phosphoshikimate + phosphate</text>
        <dbReference type="Rhea" id="RHEA:21256"/>
        <dbReference type="ChEBI" id="CHEBI:43474"/>
        <dbReference type="ChEBI" id="CHEBI:57701"/>
        <dbReference type="ChEBI" id="CHEBI:58702"/>
        <dbReference type="ChEBI" id="CHEBI:145989"/>
        <dbReference type="EC" id="2.5.1.19"/>
    </reaction>
    <physiologicalReaction direction="left-to-right" evidence="1">
        <dbReference type="Rhea" id="RHEA:21257"/>
    </physiologicalReaction>
</comment>
<comment type="pathway">
    <text evidence="1">Metabolic intermediate biosynthesis; chorismate biosynthesis; chorismate from D-erythrose 4-phosphate and phosphoenolpyruvate: step 6/7.</text>
</comment>
<comment type="subunit">
    <text evidence="1">Monomer.</text>
</comment>
<comment type="subcellular location">
    <subcellularLocation>
        <location evidence="1">Cytoplasm</location>
    </subcellularLocation>
</comment>
<comment type="similarity">
    <text evidence="1">Belongs to the EPSP synthase family.</text>
</comment>
<name>AROA_SULSY</name>
<sequence length="431" mass="47242">MEKTVKKVKRIEGSLRVPSDKSISHRAIILSSLADGTSIVKNFLKAGDTLTTVNAYRKLGVEIVEKEGVYYVHGKGLDGLKEPDDLLDMGNSGTTTRLTLGVLAGFDFFAALTGDDSLRKRPMKRVAEPLSKMGAKIDGRKDGNLLPISIRGGKLTGIDFFNEKMSAQVKSAILLAGLFAKGDTTVIEPVISRDHTENMLNSMGAYVSREFTKDGYRVTVKKADKLNPIHINVPADPSSAAFFAAAASIISGSHIELKDVLINPTRDGFFRKLKEMGAKVEYKNKRDEAGEIVADIYISYHELKGVKVEPQEVPSMIDEIPLLAIIATQAEGETVITGAHELRVKESDRIKSVIENFKRLGLEAEELPDGMIIRGKQKVKGGIVDSYKDHRIAMGFAILGLVSEEGITIKDADCVYISYPEFFNHLEKVSK</sequence>
<evidence type="ECO:0000255" key="1">
    <source>
        <dbReference type="HAMAP-Rule" id="MF_00210"/>
    </source>
</evidence>
<feature type="chain" id="PRO_1000099758" description="3-phosphoshikimate 1-carboxyvinyltransferase">
    <location>
        <begin position="1"/>
        <end position="431"/>
    </location>
</feature>
<feature type="active site" description="Proton acceptor" evidence="1">
    <location>
        <position position="318"/>
    </location>
</feature>
<feature type="binding site" evidence="1">
    <location>
        <position position="21"/>
    </location>
    <ligand>
        <name>3-phosphoshikimate</name>
        <dbReference type="ChEBI" id="CHEBI:145989"/>
    </ligand>
</feature>
<feature type="binding site" evidence="1">
    <location>
        <position position="21"/>
    </location>
    <ligand>
        <name>phosphoenolpyruvate</name>
        <dbReference type="ChEBI" id="CHEBI:58702"/>
    </ligand>
</feature>
<feature type="binding site" evidence="1">
    <location>
        <position position="22"/>
    </location>
    <ligand>
        <name>3-phosphoshikimate</name>
        <dbReference type="ChEBI" id="CHEBI:145989"/>
    </ligand>
</feature>
<feature type="binding site" evidence="1">
    <location>
        <position position="26"/>
    </location>
    <ligand>
        <name>3-phosphoshikimate</name>
        <dbReference type="ChEBI" id="CHEBI:145989"/>
    </ligand>
</feature>
<feature type="binding site" evidence="1">
    <location>
        <position position="93"/>
    </location>
    <ligand>
        <name>phosphoenolpyruvate</name>
        <dbReference type="ChEBI" id="CHEBI:58702"/>
    </ligand>
</feature>
<feature type="binding site" evidence="1">
    <location>
        <position position="121"/>
    </location>
    <ligand>
        <name>phosphoenolpyruvate</name>
        <dbReference type="ChEBI" id="CHEBI:58702"/>
    </ligand>
</feature>
<feature type="binding site" evidence="1">
    <location>
        <position position="166"/>
    </location>
    <ligand>
        <name>3-phosphoshikimate</name>
        <dbReference type="ChEBI" id="CHEBI:145989"/>
    </ligand>
</feature>
<feature type="binding site" evidence="1">
    <location>
        <position position="168"/>
    </location>
    <ligand>
        <name>3-phosphoshikimate</name>
        <dbReference type="ChEBI" id="CHEBI:145989"/>
    </ligand>
</feature>
<feature type="binding site" evidence="1">
    <location>
        <position position="168"/>
    </location>
    <ligand>
        <name>phosphoenolpyruvate</name>
        <dbReference type="ChEBI" id="CHEBI:58702"/>
    </ligand>
</feature>
<feature type="binding site" evidence="1">
    <location>
        <position position="318"/>
    </location>
    <ligand>
        <name>3-phosphoshikimate</name>
        <dbReference type="ChEBI" id="CHEBI:145989"/>
    </ligand>
</feature>
<feature type="binding site" evidence="1">
    <location>
        <position position="345"/>
    </location>
    <ligand>
        <name>3-phosphoshikimate</name>
        <dbReference type="ChEBI" id="CHEBI:145989"/>
    </ligand>
</feature>
<feature type="binding site" evidence="1">
    <location>
        <position position="349"/>
    </location>
    <ligand>
        <name>phosphoenolpyruvate</name>
        <dbReference type="ChEBI" id="CHEBI:58702"/>
    </ligand>
</feature>
<feature type="binding site" evidence="1">
    <location>
        <position position="391"/>
    </location>
    <ligand>
        <name>phosphoenolpyruvate</name>
        <dbReference type="ChEBI" id="CHEBI:58702"/>
    </ligand>
</feature>
<reference key="1">
    <citation type="journal article" date="2009" name="J. Bacteriol.">
        <title>Complete and draft genome sequences of six members of the Aquificales.</title>
        <authorList>
            <person name="Reysenbach A.-L."/>
            <person name="Hamamura N."/>
            <person name="Podar M."/>
            <person name="Griffiths E."/>
            <person name="Ferreira S."/>
            <person name="Hochstein R."/>
            <person name="Heidelberg J."/>
            <person name="Johnson J."/>
            <person name="Mead D."/>
            <person name="Pohorille A."/>
            <person name="Sarmiento M."/>
            <person name="Schweighofer K."/>
            <person name="Seshadri R."/>
            <person name="Voytek M.A."/>
        </authorList>
    </citation>
    <scope>NUCLEOTIDE SEQUENCE [LARGE SCALE GENOMIC DNA]</scope>
    <source>
        <strain>YO3AOP1</strain>
    </source>
</reference>
<dbReference type="EC" id="2.5.1.19" evidence="1"/>
<dbReference type="EMBL" id="CP001080">
    <property type="protein sequence ID" value="ACD65655.1"/>
    <property type="molecule type" value="Genomic_DNA"/>
</dbReference>
<dbReference type="RefSeq" id="WP_012458747.1">
    <property type="nucleotide sequence ID" value="NC_010730.1"/>
</dbReference>
<dbReference type="SMR" id="B2V630"/>
<dbReference type="STRING" id="436114.SYO3AOP1_0004"/>
<dbReference type="KEGG" id="sul:SYO3AOP1_0004"/>
<dbReference type="eggNOG" id="COG0128">
    <property type="taxonomic scope" value="Bacteria"/>
</dbReference>
<dbReference type="HOGENOM" id="CLU_024321_0_1_0"/>
<dbReference type="UniPathway" id="UPA00053">
    <property type="reaction ID" value="UER00089"/>
</dbReference>
<dbReference type="GO" id="GO:0005737">
    <property type="term" value="C:cytoplasm"/>
    <property type="evidence" value="ECO:0007669"/>
    <property type="project" value="UniProtKB-SubCell"/>
</dbReference>
<dbReference type="GO" id="GO:0003866">
    <property type="term" value="F:3-phosphoshikimate 1-carboxyvinyltransferase activity"/>
    <property type="evidence" value="ECO:0007669"/>
    <property type="project" value="UniProtKB-UniRule"/>
</dbReference>
<dbReference type="GO" id="GO:0008652">
    <property type="term" value="P:amino acid biosynthetic process"/>
    <property type="evidence" value="ECO:0007669"/>
    <property type="project" value="UniProtKB-KW"/>
</dbReference>
<dbReference type="GO" id="GO:0009073">
    <property type="term" value="P:aromatic amino acid family biosynthetic process"/>
    <property type="evidence" value="ECO:0007669"/>
    <property type="project" value="UniProtKB-KW"/>
</dbReference>
<dbReference type="GO" id="GO:0009423">
    <property type="term" value="P:chorismate biosynthetic process"/>
    <property type="evidence" value="ECO:0007669"/>
    <property type="project" value="UniProtKB-UniRule"/>
</dbReference>
<dbReference type="CDD" id="cd01556">
    <property type="entry name" value="EPSP_synthase"/>
    <property type="match status" value="1"/>
</dbReference>
<dbReference type="FunFam" id="3.65.10.10:FF:000005">
    <property type="entry name" value="3-phosphoshikimate 1-carboxyvinyltransferase"/>
    <property type="match status" value="1"/>
</dbReference>
<dbReference type="FunFam" id="3.65.10.10:FF:000006">
    <property type="entry name" value="3-phosphoshikimate 1-carboxyvinyltransferase"/>
    <property type="match status" value="1"/>
</dbReference>
<dbReference type="Gene3D" id="3.65.10.10">
    <property type="entry name" value="Enolpyruvate transferase domain"/>
    <property type="match status" value="2"/>
</dbReference>
<dbReference type="HAMAP" id="MF_00210">
    <property type="entry name" value="EPSP_synth"/>
    <property type="match status" value="1"/>
</dbReference>
<dbReference type="InterPro" id="IPR001986">
    <property type="entry name" value="Enolpyruvate_Tfrase_dom"/>
</dbReference>
<dbReference type="InterPro" id="IPR036968">
    <property type="entry name" value="Enolpyruvate_Tfrase_sf"/>
</dbReference>
<dbReference type="InterPro" id="IPR006264">
    <property type="entry name" value="EPSP_synthase"/>
</dbReference>
<dbReference type="InterPro" id="IPR023193">
    <property type="entry name" value="EPSP_synthase_CS"/>
</dbReference>
<dbReference type="InterPro" id="IPR013792">
    <property type="entry name" value="RNA3'P_cycl/enolpyr_Trfase_a/b"/>
</dbReference>
<dbReference type="NCBIfam" id="TIGR01356">
    <property type="entry name" value="aroA"/>
    <property type="match status" value="1"/>
</dbReference>
<dbReference type="PANTHER" id="PTHR21090">
    <property type="entry name" value="AROM/DEHYDROQUINATE SYNTHASE"/>
    <property type="match status" value="1"/>
</dbReference>
<dbReference type="PANTHER" id="PTHR21090:SF5">
    <property type="entry name" value="PENTAFUNCTIONAL AROM POLYPEPTIDE"/>
    <property type="match status" value="1"/>
</dbReference>
<dbReference type="Pfam" id="PF00275">
    <property type="entry name" value="EPSP_synthase"/>
    <property type="match status" value="1"/>
</dbReference>
<dbReference type="PIRSF" id="PIRSF000505">
    <property type="entry name" value="EPSPS"/>
    <property type="match status" value="1"/>
</dbReference>
<dbReference type="SUPFAM" id="SSF55205">
    <property type="entry name" value="EPT/RTPC-like"/>
    <property type="match status" value="1"/>
</dbReference>
<dbReference type="PROSITE" id="PS00104">
    <property type="entry name" value="EPSP_SYNTHASE_1"/>
    <property type="match status" value="1"/>
</dbReference>
<dbReference type="PROSITE" id="PS00885">
    <property type="entry name" value="EPSP_SYNTHASE_2"/>
    <property type="match status" value="1"/>
</dbReference>
<organism>
    <name type="scientific">Sulfurihydrogenibium sp. (strain YO3AOP1)</name>
    <dbReference type="NCBI Taxonomy" id="436114"/>
    <lineage>
        <taxon>Bacteria</taxon>
        <taxon>Pseudomonadati</taxon>
        <taxon>Aquificota</taxon>
        <taxon>Aquificia</taxon>
        <taxon>Aquificales</taxon>
        <taxon>Hydrogenothermaceae</taxon>
        <taxon>Sulfurihydrogenibium</taxon>
    </lineage>
</organism>